<protein>
    <recommendedName>
        <fullName>Non-specific lipid-transfer protein 1</fullName>
        <shortName>LTP 1</shortName>
    </recommendedName>
    <alternativeName>
        <fullName>Major allergen Pru d 3</fullName>
    </alternativeName>
    <allergenName>Pur d 3</allergenName>
</protein>
<name>NLTP1_PRUDO</name>
<proteinExistence type="evidence at protein level"/>
<comment type="function">
    <text>Plant non-specific lipid-transfer proteins transfer phospholipids as well as galactolipids across membranes. May play a role in wax or cutin deposition in the cell walls of expanding epidermal cells and certain secretory tissues.</text>
</comment>
<comment type="allergen">
    <text>Causes an allergic reaction in human. Binds to IgE.</text>
</comment>
<comment type="similarity">
    <text evidence="2">Belongs to the plant LTP family.</text>
</comment>
<reference key="1">
    <citation type="journal article" date="2001" name="J. Chromatogr. B">
        <title>Characterization of the major allergen of plum as a lipid transfer protein.</title>
        <authorList>
            <person name="Pastorello E.A."/>
            <person name="Farioli L."/>
            <person name="Pravettoni V."/>
            <person name="Giuffrida M.G."/>
            <person name="Ortolani C."/>
            <person name="Fortunato D."/>
            <person name="Trambaioli C."/>
            <person name="Scibola E."/>
            <person name="Calamari A.M."/>
            <person name="Robino A.M."/>
            <person name="Conti A."/>
        </authorList>
    </citation>
    <scope>PROTEIN SEQUENCE</scope>
    <source>
        <tissue>Peelings</tissue>
    </source>
</reference>
<feature type="chain" id="PRO_0000153879" description="Non-specific lipid-transfer protein 1">
    <location>
        <begin position="1"/>
        <end position="91"/>
    </location>
</feature>
<feature type="disulfide bond" evidence="1">
    <location>
        <begin position="3"/>
        <end position="50"/>
    </location>
</feature>
<feature type="disulfide bond" evidence="1">
    <location>
        <begin position="13"/>
        <end position="27"/>
    </location>
</feature>
<feature type="disulfide bond" evidence="1">
    <location>
        <begin position="28"/>
        <end position="73"/>
    </location>
</feature>
<feature type="disulfide bond" evidence="1">
    <location>
        <begin position="48"/>
        <end position="87"/>
    </location>
</feature>
<dbReference type="SMR" id="P82534"/>
<dbReference type="Allergome" id="3451">
    <property type="allergen name" value="Pru d 3.0101"/>
</dbReference>
<dbReference type="Allergome" id="601">
    <property type="allergen name" value="Pru d 3"/>
</dbReference>
<dbReference type="GO" id="GO:0008289">
    <property type="term" value="F:lipid binding"/>
    <property type="evidence" value="ECO:0007669"/>
    <property type="project" value="UniProtKB-KW"/>
</dbReference>
<dbReference type="GO" id="GO:0006869">
    <property type="term" value="P:lipid transport"/>
    <property type="evidence" value="ECO:0007669"/>
    <property type="project" value="InterPro"/>
</dbReference>
<dbReference type="CDD" id="cd01960">
    <property type="entry name" value="nsLTP1"/>
    <property type="match status" value="1"/>
</dbReference>
<dbReference type="FunFam" id="1.10.110.10:FF:000002">
    <property type="entry name" value="Non-specific lipid-transfer protein"/>
    <property type="match status" value="1"/>
</dbReference>
<dbReference type="Gene3D" id="1.10.110.10">
    <property type="entry name" value="Plant lipid-transfer and hydrophobic proteins"/>
    <property type="match status" value="1"/>
</dbReference>
<dbReference type="InterPro" id="IPR036312">
    <property type="entry name" value="Bifun_inhib/LTP/seed_sf"/>
</dbReference>
<dbReference type="InterPro" id="IPR016140">
    <property type="entry name" value="Bifunc_inhib/LTP/seed_store"/>
</dbReference>
<dbReference type="InterPro" id="IPR000528">
    <property type="entry name" value="Plant_nsLTP"/>
</dbReference>
<dbReference type="PANTHER" id="PTHR33076">
    <property type="entry name" value="NON-SPECIFIC LIPID-TRANSFER PROTEIN 2-RELATED"/>
    <property type="match status" value="1"/>
</dbReference>
<dbReference type="Pfam" id="PF00234">
    <property type="entry name" value="Tryp_alpha_amyl"/>
    <property type="match status" value="1"/>
</dbReference>
<dbReference type="PRINTS" id="PR00382">
    <property type="entry name" value="LIPIDTRNSFER"/>
</dbReference>
<dbReference type="SMART" id="SM00499">
    <property type="entry name" value="AAI"/>
    <property type="match status" value="1"/>
</dbReference>
<dbReference type="SUPFAM" id="SSF47699">
    <property type="entry name" value="Bifunctional inhibitor/lipid-transfer protein/seed storage 2S albumin"/>
    <property type="match status" value="1"/>
</dbReference>
<dbReference type="PROSITE" id="PS00597">
    <property type="entry name" value="PLANT_LTP"/>
    <property type="match status" value="1"/>
</dbReference>
<sequence length="91" mass="9175">ITCGQVSSNLAPCINYVKGGGAVPPACCNGIRNVNNLARTTADRRAACNCLKQLSGSIPGVNPNNAAALPGKCGVNVPYKISASTNCATVK</sequence>
<keyword id="KW-0020">Allergen</keyword>
<keyword id="KW-0903">Direct protein sequencing</keyword>
<keyword id="KW-1015">Disulfide bond</keyword>
<keyword id="KW-0446">Lipid-binding</keyword>
<keyword id="KW-0813">Transport</keyword>
<accession>P82534</accession>
<evidence type="ECO:0000250" key="1"/>
<evidence type="ECO:0000305" key="2"/>
<organism>
    <name type="scientific">Prunus domestica</name>
    <name type="common">Garden plum</name>
    <dbReference type="NCBI Taxonomy" id="3758"/>
    <lineage>
        <taxon>Eukaryota</taxon>
        <taxon>Viridiplantae</taxon>
        <taxon>Streptophyta</taxon>
        <taxon>Embryophyta</taxon>
        <taxon>Tracheophyta</taxon>
        <taxon>Spermatophyta</taxon>
        <taxon>Magnoliopsida</taxon>
        <taxon>eudicotyledons</taxon>
        <taxon>Gunneridae</taxon>
        <taxon>Pentapetalae</taxon>
        <taxon>rosids</taxon>
        <taxon>fabids</taxon>
        <taxon>Rosales</taxon>
        <taxon>Rosaceae</taxon>
        <taxon>Amygdaloideae</taxon>
        <taxon>Amygdaleae</taxon>
        <taxon>Prunus</taxon>
    </lineage>
</organism>